<accession>B8J2E2</accession>
<keyword id="KW-0028">Amino-acid biosynthesis</keyword>
<keyword id="KW-0100">Branched-chain amino acid biosynthesis</keyword>
<keyword id="KW-0460">Magnesium</keyword>
<keyword id="KW-0479">Metal-binding</keyword>
<keyword id="KW-0521">NADP</keyword>
<keyword id="KW-0560">Oxidoreductase</keyword>
<comment type="function">
    <text evidence="1">Involved in the biosynthesis of branched-chain amino acids (BCAA). Catalyzes an alkyl-migration followed by a ketol-acid reduction of (S)-2-acetolactate (S2AL) to yield (R)-2,3-dihydroxy-isovalerate. In the isomerase reaction, S2AL is rearranged via a Mg-dependent methyl migration to produce 3-hydroxy-3-methyl-2-ketobutyrate (HMKB). In the reductase reaction, this 2-ketoacid undergoes a metal-dependent reduction by NADPH to yield (R)-2,3-dihydroxy-isovalerate.</text>
</comment>
<comment type="catalytic activity">
    <reaction evidence="1">
        <text>(2R)-2,3-dihydroxy-3-methylbutanoate + NADP(+) = (2S)-2-acetolactate + NADPH + H(+)</text>
        <dbReference type="Rhea" id="RHEA:22068"/>
        <dbReference type="ChEBI" id="CHEBI:15378"/>
        <dbReference type="ChEBI" id="CHEBI:49072"/>
        <dbReference type="ChEBI" id="CHEBI:57783"/>
        <dbReference type="ChEBI" id="CHEBI:58349"/>
        <dbReference type="ChEBI" id="CHEBI:58476"/>
        <dbReference type="EC" id="1.1.1.86"/>
    </reaction>
</comment>
<comment type="catalytic activity">
    <reaction evidence="1">
        <text>(2R,3R)-2,3-dihydroxy-3-methylpentanoate + NADP(+) = (S)-2-ethyl-2-hydroxy-3-oxobutanoate + NADPH + H(+)</text>
        <dbReference type="Rhea" id="RHEA:13493"/>
        <dbReference type="ChEBI" id="CHEBI:15378"/>
        <dbReference type="ChEBI" id="CHEBI:49256"/>
        <dbReference type="ChEBI" id="CHEBI:49258"/>
        <dbReference type="ChEBI" id="CHEBI:57783"/>
        <dbReference type="ChEBI" id="CHEBI:58349"/>
        <dbReference type="EC" id="1.1.1.86"/>
    </reaction>
</comment>
<comment type="cofactor">
    <cofactor evidence="1">
        <name>Mg(2+)</name>
        <dbReference type="ChEBI" id="CHEBI:18420"/>
    </cofactor>
    <text evidence="1">Binds 2 magnesium ions per subunit.</text>
</comment>
<comment type="pathway">
    <text evidence="1">Amino-acid biosynthesis; L-isoleucine biosynthesis; L-isoleucine from 2-oxobutanoate: step 2/4.</text>
</comment>
<comment type="pathway">
    <text evidence="1">Amino-acid biosynthesis; L-valine biosynthesis; L-valine from pyruvate: step 2/4.</text>
</comment>
<comment type="similarity">
    <text evidence="1">Belongs to the ketol-acid reductoisomerase family.</text>
</comment>
<gene>
    <name evidence="1" type="primary">ilvC</name>
    <name type="ordered locus">Ddes_1905</name>
</gene>
<organism>
    <name type="scientific">Desulfovibrio desulfuricans (strain ATCC 27774 / DSM 6949 / MB)</name>
    <dbReference type="NCBI Taxonomy" id="525146"/>
    <lineage>
        <taxon>Bacteria</taxon>
        <taxon>Pseudomonadati</taxon>
        <taxon>Thermodesulfobacteriota</taxon>
        <taxon>Desulfovibrionia</taxon>
        <taxon>Desulfovibrionales</taxon>
        <taxon>Desulfovibrionaceae</taxon>
        <taxon>Desulfovibrio</taxon>
    </lineage>
</organism>
<sequence>MKVYYDQDADLNLLKDKTVAIIGYGSQGHAHAQNLRDSGVKVVVGQRPGGANYELAKEHGFNPVSAAEAAAQADLIMLLLPDEVQAAVYENDIKPNLAKGKALLFAHGFNIHFGQIQPPKDVDVFLIAPKGPGHLVRRTYTEGGGVPCLVAIEQDATGKALQMALAYAKGVGGARSGVIETTFREETETDLFGEQAVLCGGVSALIKAGFETLVEAGYQPEMAYFECLHEMKLIVDLMYEGGLSRMRYSISNTAEYGDYVTGPRLVTDEVKKEMKAVLKDIQSGVFARNFILEARAKYPMFLTTRRNESEHQIEKVGKELRSMMPWLKKDKKD</sequence>
<proteinExistence type="inferred from homology"/>
<name>ILVC_DESDA</name>
<feature type="chain" id="PRO_1000190947" description="Ketol-acid reductoisomerase (NADP(+))">
    <location>
        <begin position="1"/>
        <end position="333"/>
    </location>
</feature>
<feature type="domain" description="KARI N-terminal Rossmann" evidence="2">
    <location>
        <begin position="1"/>
        <end position="181"/>
    </location>
</feature>
<feature type="domain" description="KARI C-terminal knotted" evidence="3">
    <location>
        <begin position="182"/>
        <end position="327"/>
    </location>
</feature>
<feature type="active site" evidence="1">
    <location>
        <position position="107"/>
    </location>
</feature>
<feature type="binding site" evidence="1">
    <location>
        <begin position="24"/>
        <end position="27"/>
    </location>
    <ligand>
        <name>NADP(+)</name>
        <dbReference type="ChEBI" id="CHEBI:58349"/>
    </ligand>
</feature>
<feature type="binding site" evidence="1">
    <location>
        <position position="47"/>
    </location>
    <ligand>
        <name>NADP(+)</name>
        <dbReference type="ChEBI" id="CHEBI:58349"/>
    </ligand>
</feature>
<feature type="binding site" evidence="1">
    <location>
        <begin position="82"/>
        <end position="85"/>
    </location>
    <ligand>
        <name>NADP(+)</name>
        <dbReference type="ChEBI" id="CHEBI:58349"/>
    </ligand>
</feature>
<feature type="binding site" evidence="1">
    <location>
        <position position="133"/>
    </location>
    <ligand>
        <name>NADP(+)</name>
        <dbReference type="ChEBI" id="CHEBI:58349"/>
    </ligand>
</feature>
<feature type="binding site" evidence="1">
    <location>
        <position position="190"/>
    </location>
    <ligand>
        <name>Mg(2+)</name>
        <dbReference type="ChEBI" id="CHEBI:18420"/>
        <label>1</label>
    </ligand>
</feature>
<feature type="binding site" evidence="1">
    <location>
        <position position="190"/>
    </location>
    <ligand>
        <name>Mg(2+)</name>
        <dbReference type="ChEBI" id="CHEBI:18420"/>
        <label>2</label>
    </ligand>
</feature>
<feature type="binding site" evidence="1">
    <location>
        <position position="194"/>
    </location>
    <ligand>
        <name>Mg(2+)</name>
        <dbReference type="ChEBI" id="CHEBI:18420"/>
        <label>1</label>
    </ligand>
</feature>
<feature type="binding site" evidence="1">
    <location>
        <position position="226"/>
    </location>
    <ligand>
        <name>Mg(2+)</name>
        <dbReference type="ChEBI" id="CHEBI:18420"/>
        <label>2</label>
    </ligand>
</feature>
<feature type="binding site" evidence="1">
    <location>
        <position position="230"/>
    </location>
    <ligand>
        <name>Mg(2+)</name>
        <dbReference type="ChEBI" id="CHEBI:18420"/>
        <label>2</label>
    </ligand>
</feature>
<feature type="binding site" evidence="1">
    <location>
        <position position="251"/>
    </location>
    <ligand>
        <name>substrate</name>
    </ligand>
</feature>
<reference key="1">
    <citation type="submission" date="2009-01" db="EMBL/GenBank/DDBJ databases">
        <title>Complete sequence of Desulfovibrio desulfuricans subsp. desulfuricans str. ATCC 27774.</title>
        <authorList>
            <consortium name="US DOE Joint Genome Institute"/>
            <person name="Lucas S."/>
            <person name="Copeland A."/>
            <person name="Lapidus A."/>
            <person name="Glavina del Rio T."/>
            <person name="Tice H."/>
            <person name="Bruce D."/>
            <person name="Goodwin L."/>
            <person name="Pitluck S."/>
            <person name="Sims D."/>
            <person name="Lu M."/>
            <person name="Kiss H."/>
            <person name="Meineke L."/>
            <person name="Brettin T."/>
            <person name="Detter J.C."/>
            <person name="Han C."/>
            <person name="Larimer F."/>
            <person name="Land M."/>
            <person name="Hauser L."/>
            <person name="Kyrpides N."/>
            <person name="Ovchinnikova G."/>
            <person name="Hazen T.C."/>
        </authorList>
    </citation>
    <scope>NUCLEOTIDE SEQUENCE [LARGE SCALE GENOMIC DNA]</scope>
    <source>
        <strain>ATCC 27774 / DSM 6949 / MB</strain>
    </source>
</reference>
<evidence type="ECO:0000255" key="1">
    <source>
        <dbReference type="HAMAP-Rule" id="MF_00435"/>
    </source>
</evidence>
<evidence type="ECO:0000255" key="2">
    <source>
        <dbReference type="PROSITE-ProRule" id="PRU01197"/>
    </source>
</evidence>
<evidence type="ECO:0000255" key="3">
    <source>
        <dbReference type="PROSITE-ProRule" id="PRU01198"/>
    </source>
</evidence>
<protein>
    <recommendedName>
        <fullName evidence="1">Ketol-acid reductoisomerase (NADP(+))</fullName>
        <shortName evidence="1">KARI</shortName>
        <ecNumber evidence="1">1.1.1.86</ecNumber>
    </recommendedName>
    <alternativeName>
        <fullName evidence="1">Acetohydroxy-acid isomeroreductase</fullName>
        <shortName evidence="1">AHIR</shortName>
    </alternativeName>
    <alternativeName>
        <fullName evidence="1">Alpha-keto-beta-hydroxylacyl reductoisomerase</fullName>
    </alternativeName>
    <alternativeName>
        <fullName evidence="1">Ketol-acid reductoisomerase type 1</fullName>
    </alternativeName>
    <alternativeName>
        <fullName evidence="1">Ketol-acid reductoisomerase type I</fullName>
    </alternativeName>
</protein>
<dbReference type="EC" id="1.1.1.86" evidence="1"/>
<dbReference type="EMBL" id="CP001358">
    <property type="protein sequence ID" value="ACL49801.1"/>
    <property type="molecule type" value="Genomic_DNA"/>
</dbReference>
<dbReference type="SMR" id="B8J2E2"/>
<dbReference type="STRING" id="525146.Ddes_1905"/>
<dbReference type="KEGG" id="dds:Ddes_1905"/>
<dbReference type="eggNOG" id="COG0059">
    <property type="taxonomic scope" value="Bacteria"/>
</dbReference>
<dbReference type="HOGENOM" id="CLU_033821_0_1_7"/>
<dbReference type="UniPathway" id="UPA00047">
    <property type="reaction ID" value="UER00056"/>
</dbReference>
<dbReference type="UniPathway" id="UPA00049">
    <property type="reaction ID" value="UER00060"/>
</dbReference>
<dbReference type="GO" id="GO:0005829">
    <property type="term" value="C:cytosol"/>
    <property type="evidence" value="ECO:0007669"/>
    <property type="project" value="TreeGrafter"/>
</dbReference>
<dbReference type="GO" id="GO:0004455">
    <property type="term" value="F:ketol-acid reductoisomerase activity"/>
    <property type="evidence" value="ECO:0007669"/>
    <property type="project" value="UniProtKB-UniRule"/>
</dbReference>
<dbReference type="GO" id="GO:0000287">
    <property type="term" value="F:magnesium ion binding"/>
    <property type="evidence" value="ECO:0007669"/>
    <property type="project" value="UniProtKB-UniRule"/>
</dbReference>
<dbReference type="GO" id="GO:0050661">
    <property type="term" value="F:NADP binding"/>
    <property type="evidence" value="ECO:0007669"/>
    <property type="project" value="InterPro"/>
</dbReference>
<dbReference type="GO" id="GO:0009097">
    <property type="term" value="P:isoleucine biosynthetic process"/>
    <property type="evidence" value="ECO:0007669"/>
    <property type="project" value="UniProtKB-UniRule"/>
</dbReference>
<dbReference type="GO" id="GO:0009099">
    <property type="term" value="P:L-valine biosynthetic process"/>
    <property type="evidence" value="ECO:0007669"/>
    <property type="project" value="UniProtKB-UniRule"/>
</dbReference>
<dbReference type="FunFam" id="3.40.50.720:FF:000023">
    <property type="entry name" value="Ketol-acid reductoisomerase (NADP(+))"/>
    <property type="match status" value="1"/>
</dbReference>
<dbReference type="Gene3D" id="6.10.240.10">
    <property type="match status" value="1"/>
</dbReference>
<dbReference type="Gene3D" id="3.40.50.720">
    <property type="entry name" value="NAD(P)-binding Rossmann-like Domain"/>
    <property type="match status" value="1"/>
</dbReference>
<dbReference type="HAMAP" id="MF_00435">
    <property type="entry name" value="IlvC"/>
    <property type="match status" value="1"/>
</dbReference>
<dbReference type="InterPro" id="IPR008927">
    <property type="entry name" value="6-PGluconate_DH-like_C_sf"/>
</dbReference>
<dbReference type="InterPro" id="IPR013023">
    <property type="entry name" value="KARI"/>
</dbReference>
<dbReference type="InterPro" id="IPR000506">
    <property type="entry name" value="KARI_C"/>
</dbReference>
<dbReference type="InterPro" id="IPR013116">
    <property type="entry name" value="KARI_N"/>
</dbReference>
<dbReference type="InterPro" id="IPR014359">
    <property type="entry name" value="KARI_prok"/>
</dbReference>
<dbReference type="InterPro" id="IPR036291">
    <property type="entry name" value="NAD(P)-bd_dom_sf"/>
</dbReference>
<dbReference type="NCBIfam" id="TIGR00465">
    <property type="entry name" value="ilvC"/>
    <property type="match status" value="1"/>
</dbReference>
<dbReference type="NCBIfam" id="NF004017">
    <property type="entry name" value="PRK05479.1"/>
    <property type="match status" value="1"/>
</dbReference>
<dbReference type="NCBIfam" id="NF009940">
    <property type="entry name" value="PRK13403.1"/>
    <property type="match status" value="1"/>
</dbReference>
<dbReference type="PANTHER" id="PTHR21371">
    <property type="entry name" value="KETOL-ACID REDUCTOISOMERASE, MITOCHONDRIAL"/>
    <property type="match status" value="1"/>
</dbReference>
<dbReference type="PANTHER" id="PTHR21371:SF1">
    <property type="entry name" value="KETOL-ACID REDUCTOISOMERASE, MITOCHONDRIAL"/>
    <property type="match status" value="1"/>
</dbReference>
<dbReference type="Pfam" id="PF01450">
    <property type="entry name" value="KARI_C"/>
    <property type="match status" value="1"/>
</dbReference>
<dbReference type="Pfam" id="PF07991">
    <property type="entry name" value="KARI_N"/>
    <property type="match status" value="1"/>
</dbReference>
<dbReference type="PIRSF" id="PIRSF000116">
    <property type="entry name" value="IlvC_gammaproteo"/>
    <property type="match status" value="1"/>
</dbReference>
<dbReference type="SUPFAM" id="SSF48179">
    <property type="entry name" value="6-phosphogluconate dehydrogenase C-terminal domain-like"/>
    <property type="match status" value="1"/>
</dbReference>
<dbReference type="SUPFAM" id="SSF51735">
    <property type="entry name" value="NAD(P)-binding Rossmann-fold domains"/>
    <property type="match status" value="1"/>
</dbReference>
<dbReference type="PROSITE" id="PS51851">
    <property type="entry name" value="KARI_C"/>
    <property type="match status" value="1"/>
</dbReference>
<dbReference type="PROSITE" id="PS51850">
    <property type="entry name" value="KARI_N"/>
    <property type="match status" value="1"/>
</dbReference>